<proteinExistence type="evidence at transcript level"/>
<feature type="chain" id="PRO_0000162619" description="Period circadian protein">
    <location>
        <begin position="1" status="less than"/>
        <end position="358" status="greater than"/>
    </location>
</feature>
<feature type="domain" description="PAS 1" evidence="2">
    <location>
        <begin position="1" status="less than"/>
        <end position="120"/>
    </location>
</feature>
<feature type="domain" description="PAS 2" evidence="2">
    <location>
        <begin position="138"/>
        <end position="240"/>
    </location>
</feature>
<feature type="non-terminal residue">
    <location>
        <position position="1"/>
    </location>
</feature>
<feature type="non-terminal residue">
    <location>
        <position position="358"/>
    </location>
</feature>
<dbReference type="EMBL" id="U12771">
    <property type="protein sequence ID" value="AAA64676.1"/>
    <property type="molecule type" value="mRNA"/>
</dbReference>
<dbReference type="SMR" id="Q25020"/>
<dbReference type="GO" id="GO:0005737">
    <property type="term" value="C:cytoplasm"/>
    <property type="evidence" value="ECO:0007669"/>
    <property type="project" value="TreeGrafter"/>
</dbReference>
<dbReference type="GO" id="GO:0005634">
    <property type="term" value="C:nucleus"/>
    <property type="evidence" value="ECO:0007669"/>
    <property type="project" value="UniProtKB-SubCell"/>
</dbReference>
<dbReference type="GO" id="GO:0000976">
    <property type="term" value="F:transcription cis-regulatory region binding"/>
    <property type="evidence" value="ECO:0007669"/>
    <property type="project" value="TreeGrafter"/>
</dbReference>
<dbReference type="GO" id="GO:0001222">
    <property type="term" value="F:transcription corepressor binding"/>
    <property type="evidence" value="ECO:0007669"/>
    <property type="project" value="TreeGrafter"/>
</dbReference>
<dbReference type="GO" id="GO:0032922">
    <property type="term" value="P:circadian regulation of gene expression"/>
    <property type="evidence" value="ECO:0007669"/>
    <property type="project" value="TreeGrafter"/>
</dbReference>
<dbReference type="GO" id="GO:0043153">
    <property type="term" value="P:entrainment of circadian clock by photoperiod"/>
    <property type="evidence" value="ECO:0007669"/>
    <property type="project" value="TreeGrafter"/>
</dbReference>
<dbReference type="GO" id="GO:0000122">
    <property type="term" value="P:negative regulation of transcription by RNA polymerase II"/>
    <property type="evidence" value="ECO:0007669"/>
    <property type="project" value="TreeGrafter"/>
</dbReference>
<dbReference type="CDD" id="cd00130">
    <property type="entry name" value="PAS"/>
    <property type="match status" value="2"/>
</dbReference>
<dbReference type="Gene3D" id="3.30.450.20">
    <property type="entry name" value="PAS domain"/>
    <property type="match status" value="2"/>
</dbReference>
<dbReference type="Gene3D" id="1.20.5.770">
    <property type="entry name" value="Single helix bin"/>
    <property type="match status" value="1"/>
</dbReference>
<dbReference type="InterPro" id="IPR000014">
    <property type="entry name" value="PAS"/>
</dbReference>
<dbReference type="InterPro" id="IPR035965">
    <property type="entry name" value="PAS-like_dom_sf"/>
</dbReference>
<dbReference type="InterPro" id="IPR050760">
    <property type="entry name" value="Period_circadian_regulator"/>
</dbReference>
<dbReference type="PANTHER" id="PTHR11269">
    <property type="entry name" value="PERIOD CIRCADIAN PROTEIN"/>
    <property type="match status" value="1"/>
</dbReference>
<dbReference type="PANTHER" id="PTHR11269:SF16">
    <property type="entry name" value="PERIOD CIRCADIAN PROTEIN"/>
    <property type="match status" value="1"/>
</dbReference>
<dbReference type="Pfam" id="PF14598">
    <property type="entry name" value="PAS_11"/>
    <property type="match status" value="1"/>
</dbReference>
<dbReference type="SMART" id="SM00091">
    <property type="entry name" value="PAS"/>
    <property type="match status" value="1"/>
</dbReference>
<dbReference type="SUPFAM" id="SSF55785">
    <property type="entry name" value="PYP-like sensor domain (PAS domain)"/>
    <property type="match status" value="2"/>
</dbReference>
<dbReference type="PROSITE" id="PS50112">
    <property type="entry name" value="PAS"/>
    <property type="match status" value="2"/>
</dbReference>
<comment type="function">
    <text evidence="1">Involved in the generation of biological rhythms. The biological cycle depends on the rhythmic formation and nuclear localization of the tim-per complex. Light induces the degradation of tim, which promotes elimination of per. Nuclear activity of the heterodimer coordinatively regulates per and tim transcription negative feedback loop. Behaves as a negative element in circadian transcriptional loop. Does not appear to bind DNA, suggesting indirect transcriptional inhibition (By similarity).</text>
</comment>
<comment type="subunit">
    <text evidence="1">Forms a heterodimer with timeless (TIM); the complex then translocates into the nucleus.</text>
</comment>
<comment type="subcellular location">
    <subcellularLocation>
        <location>Nucleus</location>
    </subcellularLocation>
    <text evidence="1">Nuclear at specific periods of the day. Interaction with TIM is required for nuclear localization (By similarity).</text>
</comment>
<comment type="PTM">
    <text evidence="1">Phosphorylated with a circadian rhythmicity.</text>
</comment>
<sequence>GVVMYTTSSITATLGFPKDMWIGRSFIDFLHPKDANTFASQITNGLAIPKIVNDTQEKAQIFGTQGSTMVCRIRRYRGLSSGFGVKDTSVSYMPFLLKFRFRNISDDKGLVVYLVIQTVPFFSAYKTPNEILTQEVSFIMRHSANGNLEYIDPDCVPYLGYIPQDITNRNALVLYHPGDLPFLQEVYQAIVKEGSVTRSKSYRMVTQNGHFIKVETEWSAFINPWSRKLEFVNGKYYIIEGPANPDVFESPDPEKTPKLTEERKNQAQICRDDIIRIMNEVLTNPAEIAKQQMSKRCQELALFMEILQEEQPKAEEEFHLQTQDVDHTYYERDSVMLGGISPHHEYNDIKSSAETSLS</sequence>
<reference key="1">
    <citation type="journal article" date="1994" name="Neuron">
        <title>Cloning of a structural and functional homolog of the circadian clock gene period from the giant silkmoth Antheraea pernyi.</title>
        <authorList>
            <person name="Reppert S.M."/>
            <person name="Tsai T."/>
            <person name="Roca A.L."/>
            <person name="Sauman I."/>
        </authorList>
    </citation>
    <scope>NUCLEOTIDE SEQUENCE [MRNA]</scope>
</reference>
<protein>
    <recommendedName>
        <fullName>Period circadian protein</fullName>
    </recommendedName>
</protein>
<keyword id="KW-0090">Biological rhythms</keyword>
<keyword id="KW-0539">Nucleus</keyword>
<keyword id="KW-0597">Phosphoprotein</keyword>
<keyword id="KW-0677">Repeat</keyword>
<name>PER_HYACE</name>
<gene>
    <name type="primary">per</name>
</gene>
<accession>Q25020</accession>
<evidence type="ECO:0000250" key="1"/>
<evidence type="ECO:0000255" key="2">
    <source>
        <dbReference type="PROSITE-ProRule" id="PRU00140"/>
    </source>
</evidence>
<organism>
    <name type="scientific">Hyalophora cecropia</name>
    <name type="common">Cecropia moth</name>
    <name type="synonym">Samia cecropia</name>
    <dbReference type="NCBI Taxonomy" id="7123"/>
    <lineage>
        <taxon>Eukaryota</taxon>
        <taxon>Metazoa</taxon>
        <taxon>Ecdysozoa</taxon>
        <taxon>Arthropoda</taxon>
        <taxon>Hexapoda</taxon>
        <taxon>Insecta</taxon>
        <taxon>Pterygota</taxon>
        <taxon>Neoptera</taxon>
        <taxon>Endopterygota</taxon>
        <taxon>Lepidoptera</taxon>
        <taxon>Glossata</taxon>
        <taxon>Ditrysia</taxon>
        <taxon>Bombycoidea</taxon>
        <taxon>Saturniidae</taxon>
        <taxon>Saturniinae</taxon>
        <taxon>Attacini</taxon>
        <taxon>Hyalophora</taxon>
    </lineage>
</organism>